<sequence>MQLMRFDKPIGTLLLLHPTLWALFAAAGGIPSSSILIIFILGVIVMRAAGCVINDYADRHIDGKVKRTSQRPLATGRVTTVEAKVLFFVLLIIAFLLDLSLNQYAFLLSFVAVALAVIYPFMKRFTHLPQVVLGMAFGWAIPMAYGAVIEDLPLTCWLLFLANILWTVAYDTQYAMVDRDDDLRIGVKSTAILFAQYDNKIIALLQFLSLILFILFGWLSEYHIGYFIVLALTSTLFIYQCWLTKQRVREQCFKAFLNNNYFGFGIFIAILVGIYGF</sequence>
<protein>
    <recommendedName>
        <fullName evidence="1">4-hydroxybenzoate octaprenyltransferase</fullName>
        <ecNumber evidence="1">2.5.1.39</ecNumber>
    </recommendedName>
    <alternativeName>
        <fullName evidence="1">4-HB polyprenyltransferase</fullName>
    </alternativeName>
</protein>
<reference key="1">
    <citation type="submission" date="2003-06" db="EMBL/GenBank/DDBJ databases">
        <title>The complete genome sequence of Haemophilus ducreyi.</title>
        <authorList>
            <person name="Munson R.S. Jr."/>
            <person name="Ray W.C."/>
            <person name="Mahairas G."/>
            <person name="Sabo P."/>
            <person name="Mungur R."/>
            <person name="Johnson L."/>
            <person name="Nguyen D."/>
            <person name="Wang J."/>
            <person name="Forst C."/>
            <person name="Hood L."/>
        </authorList>
    </citation>
    <scope>NUCLEOTIDE SEQUENCE [LARGE SCALE GENOMIC DNA]</scope>
    <source>
        <strain>35000HP / ATCC 700724</strain>
    </source>
</reference>
<organism>
    <name type="scientific">Haemophilus ducreyi (strain 35000HP / ATCC 700724)</name>
    <dbReference type="NCBI Taxonomy" id="233412"/>
    <lineage>
        <taxon>Bacteria</taxon>
        <taxon>Pseudomonadati</taxon>
        <taxon>Pseudomonadota</taxon>
        <taxon>Gammaproteobacteria</taxon>
        <taxon>Pasteurellales</taxon>
        <taxon>Pasteurellaceae</taxon>
        <taxon>Haemophilus</taxon>
    </lineage>
</organism>
<proteinExistence type="inferred from homology"/>
<accession>Q7VL38</accession>
<gene>
    <name evidence="1" type="primary">ubiA</name>
    <name type="ordered locus">HD_1647</name>
</gene>
<evidence type="ECO:0000255" key="1">
    <source>
        <dbReference type="HAMAP-Rule" id="MF_01635"/>
    </source>
</evidence>
<dbReference type="EC" id="2.5.1.39" evidence="1"/>
<dbReference type="EMBL" id="AE017143">
    <property type="protein sequence ID" value="AAP96421.1"/>
    <property type="molecule type" value="Genomic_DNA"/>
</dbReference>
<dbReference type="RefSeq" id="WP_010945453.1">
    <property type="nucleotide sequence ID" value="NC_002940.2"/>
</dbReference>
<dbReference type="SMR" id="Q7VL38"/>
<dbReference type="STRING" id="233412.HD_1647"/>
<dbReference type="KEGG" id="hdu:HD_1647"/>
<dbReference type="eggNOG" id="COG0382">
    <property type="taxonomic scope" value="Bacteria"/>
</dbReference>
<dbReference type="HOGENOM" id="CLU_034879_1_0_6"/>
<dbReference type="OrthoDB" id="9782418at2"/>
<dbReference type="UniPathway" id="UPA00232"/>
<dbReference type="Proteomes" id="UP000001022">
    <property type="component" value="Chromosome"/>
</dbReference>
<dbReference type="GO" id="GO:0005886">
    <property type="term" value="C:plasma membrane"/>
    <property type="evidence" value="ECO:0007669"/>
    <property type="project" value="UniProtKB-SubCell"/>
</dbReference>
<dbReference type="GO" id="GO:0008412">
    <property type="term" value="F:4-hydroxybenzoate polyprenyltransferase activity"/>
    <property type="evidence" value="ECO:0007669"/>
    <property type="project" value="UniProtKB-UniRule"/>
</dbReference>
<dbReference type="GO" id="GO:0006744">
    <property type="term" value="P:ubiquinone biosynthetic process"/>
    <property type="evidence" value="ECO:0007669"/>
    <property type="project" value="UniProtKB-UniRule"/>
</dbReference>
<dbReference type="CDD" id="cd13959">
    <property type="entry name" value="PT_UbiA_COQ2"/>
    <property type="match status" value="1"/>
</dbReference>
<dbReference type="FunFam" id="1.10.357.140:FF:000002">
    <property type="entry name" value="4-hydroxybenzoate octaprenyltransferase"/>
    <property type="match status" value="1"/>
</dbReference>
<dbReference type="FunFam" id="1.20.120.1780:FF:000001">
    <property type="entry name" value="4-hydroxybenzoate octaprenyltransferase"/>
    <property type="match status" value="1"/>
</dbReference>
<dbReference type="Gene3D" id="1.10.357.140">
    <property type="entry name" value="UbiA prenyltransferase"/>
    <property type="match status" value="1"/>
</dbReference>
<dbReference type="Gene3D" id="1.20.120.1780">
    <property type="entry name" value="UbiA prenyltransferase"/>
    <property type="match status" value="1"/>
</dbReference>
<dbReference type="HAMAP" id="MF_01635">
    <property type="entry name" value="UbiA"/>
    <property type="match status" value="1"/>
</dbReference>
<dbReference type="InterPro" id="IPR006370">
    <property type="entry name" value="HB_polyprenyltransferase-like"/>
</dbReference>
<dbReference type="InterPro" id="IPR039653">
    <property type="entry name" value="Prenyltransferase"/>
</dbReference>
<dbReference type="InterPro" id="IPR000537">
    <property type="entry name" value="UbiA_prenyltransferase"/>
</dbReference>
<dbReference type="InterPro" id="IPR030470">
    <property type="entry name" value="UbiA_prenylTrfase_CS"/>
</dbReference>
<dbReference type="InterPro" id="IPR044878">
    <property type="entry name" value="UbiA_sf"/>
</dbReference>
<dbReference type="NCBIfam" id="TIGR01474">
    <property type="entry name" value="ubiA_proteo"/>
    <property type="match status" value="1"/>
</dbReference>
<dbReference type="PANTHER" id="PTHR11048:SF28">
    <property type="entry name" value="4-HYDROXYBENZOATE POLYPRENYLTRANSFERASE, MITOCHONDRIAL"/>
    <property type="match status" value="1"/>
</dbReference>
<dbReference type="PANTHER" id="PTHR11048">
    <property type="entry name" value="PRENYLTRANSFERASES"/>
    <property type="match status" value="1"/>
</dbReference>
<dbReference type="Pfam" id="PF01040">
    <property type="entry name" value="UbiA"/>
    <property type="match status" value="1"/>
</dbReference>
<dbReference type="PROSITE" id="PS00943">
    <property type="entry name" value="UBIA"/>
    <property type="match status" value="1"/>
</dbReference>
<comment type="function">
    <text evidence="1">Catalyzes the prenylation of para-hydroxybenzoate (PHB) with an all-trans polyprenyl group. Mediates the second step in the final reaction sequence of ubiquinone-8 (UQ-8) biosynthesis, which is the condensation of the polyisoprenoid side chain with PHB, generating the first membrane-bound Q intermediate 3-octaprenyl-4-hydroxybenzoate.</text>
</comment>
<comment type="catalytic activity">
    <reaction evidence="1">
        <text>all-trans-octaprenyl diphosphate + 4-hydroxybenzoate = 4-hydroxy-3-(all-trans-octaprenyl)benzoate + diphosphate</text>
        <dbReference type="Rhea" id="RHEA:27782"/>
        <dbReference type="ChEBI" id="CHEBI:1617"/>
        <dbReference type="ChEBI" id="CHEBI:17879"/>
        <dbReference type="ChEBI" id="CHEBI:33019"/>
        <dbReference type="ChEBI" id="CHEBI:57711"/>
        <dbReference type="EC" id="2.5.1.39"/>
    </reaction>
</comment>
<comment type="cofactor">
    <cofactor evidence="1">
        <name>Mg(2+)</name>
        <dbReference type="ChEBI" id="CHEBI:18420"/>
    </cofactor>
</comment>
<comment type="pathway">
    <text evidence="1">Cofactor biosynthesis; ubiquinone biosynthesis.</text>
</comment>
<comment type="subcellular location">
    <subcellularLocation>
        <location evidence="1">Cell inner membrane</location>
        <topology evidence="1">Multi-pass membrane protein</topology>
    </subcellularLocation>
</comment>
<comment type="similarity">
    <text evidence="1">Belongs to the UbiA prenyltransferase family.</text>
</comment>
<name>UBIA_HAEDU</name>
<keyword id="KW-0997">Cell inner membrane</keyword>
<keyword id="KW-1003">Cell membrane</keyword>
<keyword id="KW-0460">Magnesium</keyword>
<keyword id="KW-0472">Membrane</keyword>
<keyword id="KW-1185">Reference proteome</keyword>
<keyword id="KW-0808">Transferase</keyword>
<keyword id="KW-0812">Transmembrane</keyword>
<keyword id="KW-1133">Transmembrane helix</keyword>
<keyword id="KW-0831">Ubiquinone biosynthesis</keyword>
<feature type="chain" id="PRO_0000262799" description="4-hydroxybenzoate octaprenyltransferase">
    <location>
        <begin position="1"/>
        <end position="277"/>
    </location>
</feature>
<feature type="transmembrane region" description="Helical" evidence="1">
    <location>
        <begin position="24"/>
        <end position="44"/>
    </location>
</feature>
<feature type="transmembrane region" description="Helical" evidence="1">
    <location>
        <begin position="81"/>
        <end position="101"/>
    </location>
</feature>
<feature type="transmembrane region" description="Helical" evidence="1">
    <location>
        <begin position="102"/>
        <end position="122"/>
    </location>
</feature>
<feature type="transmembrane region" description="Helical" evidence="1">
    <location>
        <begin position="129"/>
        <end position="149"/>
    </location>
</feature>
<feature type="transmembrane region" description="Helical" evidence="1">
    <location>
        <begin position="152"/>
        <end position="172"/>
    </location>
</feature>
<feature type="transmembrane region" description="Helical" evidence="1">
    <location>
        <begin position="201"/>
        <end position="221"/>
    </location>
</feature>
<feature type="transmembrane region" description="Helical" evidence="1">
    <location>
        <begin position="224"/>
        <end position="244"/>
    </location>
</feature>
<feature type="transmembrane region" description="Helical" evidence="1">
    <location>
        <begin position="255"/>
        <end position="275"/>
    </location>
</feature>